<organism>
    <name type="scientific">Halalkalibacterium halodurans (strain ATCC BAA-125 / DSM 18197 / FERM 7344 / JCM 9153 / C-125)</name>
    <name type="common">Bacillus halodurans</name>
    <dbReference type="NCBI Taxonomy" id="272558"/>
    <lineage>
        <taxon>Bacteria</taxon>
        <taxon>Bacillati</taxon>
        <taxon>Bacillota</taxon>
        <taxon>Bacilli</taxon>
        <taxon>Bacillales</taxon>
        <taxon>Bacillaceae</taxon>
        <taxon>Halalkalibacterium (ex Joshi et al. 2022)</taxon>
    </lineage>
</organism>
<comment type="function">
    <text evidence="1">Catalyzes the conversion of heme O to heme A by two successive hydroxylations of the methyl group at C8. The first hydroxylation forms heme I, the second hydroxylation results in an unstable dihydroxymethyl group, which spontaneously dehydrates, resulting in the formyl group of heme A.</text>
</comment>
<comment type="catalytic activity">
    <reaction evidence="1">
        <text>Fe(II)-heme o + 2 A + H2O = Fe(II)-heme a + 2 AH2</text>
        <dbReference type="Rhea" id="RHEA:63388"/>
        <dbReference type="ChEBI" id="CHEBI:13193"/>
        <dbReference type="ChEBI" id="CHEBI:15377"/>
        <dbReference type="ChEBI" id="CHEBI:17499"/>
        <dbReference type="ChEBI" id="CHEBI:60530"/>
        <dbReference type="ChEBI" id="CHEBI:61715"/>
        <dbReference type="EC" id="1.17.99.9"/>
    </reaction>
    <physiologicalReaction direction="left-to-right" evidence="1">
        <dbReference type="Rhea" id="RHEA:63389"/>
    </physiologicalReaction>
</comment>
<comment type="cofactor">
    <cofactor evidence="1">
        <name>heme b</name>
        <dbReference type="ChEBI" id="CHEBI:60344"/>
    </cofactor>
</comment>
<comment type="pathway">
    <text evidence="1">Porphyrin-containing compound metabolism; heme A biosynthesis; heme A from heme O: step 1/1.</text>
</comment>
<comment type="subunit">
    <text evidence="1">Interacts with CtaB.</text>
</comment>
<comment type="subcellular location">
    <subcellularLocation>
        <location evidence="1">Cell membrane</location>
        <topology evidence="1">Multi-pass membrane protein</topology>
    </subcellularLocation>
</comment>
<comment type="domain">
    <text evidence="1">The N-half (TM1-TM4) and C-half (TM5-TM8) domains are connected by an intracellular loop. Each domain is formed from four-helix bundles and they align in a pseudo twofold symmetry manner. The N-half domain is the substrate-heme O binding domain and the C-half domain is the cofactor heme B binding domain.</text>
</comment>
<comment type="domain">
    <text evidence="1">The cysteines of disulfide bond Cys-35 and Cys-42 may be involved in transfer of reducing equivalents from quinol in the membrane to the active site of the enzyme.</text>
</comment>
<comment type="similarity">
    <text evidence="1">Belongs to the COX15/CtaA family. Type 1 subfamily.</text>
</comment>
<sequence length="298" mass="32445">MHRSLKIFGTLTSIGMVIVLMQGALVTKTESGEGCGATWPLCFGEVIPTNPAIETIIEYSHRIVSGLLGAMVIILAIWAWRKLSHIRETKVMAILAVLFIIFQGLLGAGAVVFGQSHAILALHFGISAISLATVVLLTTLAFEDGKPNPPALIVKKGYKGYILAVFAYCYAVIYTGAYVKHTQATLACGDFPLCNGQWIPMLSGPVGAHFFHRVAGTLLLILLVVALIWTLRKYSHYRSLVWTHILCVILVLTQYATGISIVLTGNELFVAMMHALIVSILFTTLCYIVMILSRNKAV</sequence>
<accession>Q9K9M8</accession>
<gene>
    <name evidence="1" type="primary">ctaA</name>
    <name type="ordered locus">BH2617</name>
</gene>
<reference key="1">
    <citation type="journal article" date="2000" name="Nucleic Acids Res.">
        <title>Complete genome sequence of the alkaliphilic bacterium Bacillus halodurans and genomic sequence comparison with Bacillus subtilis.</title>
        <authorList>
            <person name="Takami H."/>
            <person name="Nakasone K."/>
            <person name="Takaki Y."/>
            <person name="Maeno G."/>
            <person name="Sasaki R."/>
            <person name="Masui N."/>
            <person name="Fuji F."/>
            <person name="Hirama C."/>
            <person name="Nakamura Y."/>
            <person name="Ogasawara N."/>
            <person name="Kuhara S."/>
            <person name="Horikoshi K."/>
        </authorList>
    </citation>
    <scope>NUCLEOTIDE SEQUENCE [LARGE SCALE GENOMIC DNA]</scope>
    <source>
        <strain>ATCC BAA-125 / DSM 18197 / FERM 7344 / JCM 9153 / C-125</strain>
    </source>
</reference>
<proteinExistence type="inferred from homology"/>
<evidence type="ECO:0000255" key="1">
    <source>
        <dbReference type="HAMAP-Rule" id="MF_01664"/>
    </source>
</evidence>
<keyword id="KW-1003">Cell membrane</keyword>
<keyword id="KW-1015">Disulfide bond</keyword>
<keyword id="KW-0350">Heme biosynthesis</keyword>
<keyword id="KW-0408">Iron</keyword>
<keyword id="KW-0472">Membrane</keyword>
<keyword id="KW-0479">Metal-binding</keyword>
<keyword id="KW-0560">Oxidoreductase</keyword>
<keyword id="KW-1185">Reference proteome</keyword>
<keyword id="KW-0812">Transmembrane</keyword>
<keyword id="KW-1133">Transmembrane helix</keyword>
<name>CTAA_HALH5</name>
<dbReference type="EC" id="1.17.99.9" evidence="1"/>
<dbReference type="EMBL" id="BA000004">
    <property type="protein sequence ID" value="BAB06336.1"/>
    <property type="molecule type" value="Genomic_DNA"/>
</dbReference>
<dbReference type="PIR" id="A83977">
    <property type="entry name" value="A83977"/>
</dbReference>
<dbReference type="RefSeq" id="WP_010898768.1">
    <property type="nucleotide sequence ID" value="NC_002570.2"/>
</dbReference>
<dbReference type="SMR" id="Q9K9M8"/>
<dbReference type="STRING" id="272558.gene:10728515"/>
<dbReference type="DNASU" id="892546"/>
<dbReference type="KEGG" id="bha:BH2617"/>
<dbReference type="eggNOG" id="COG1612">
    <property type="taxonomic scope" value="Bacteria"/>
</dbReference>
<dbReference type="HOGENOM" id="CLU_041525_3_0_9"/>
<dbReference type="OrthoDB" id="9816428at2"/>
<dbReference type="UniPathway" id="UPA00269">
    <property type="reaction ID" value="UER00713"/>
</dbReference>
<dbReference type="Proteomes" id="UP000001258">
    <property type="component" value="Chromosome"/>
</dbReference>
<dbReference type="GO" id="GO:0005886">
    <property type="term" value="C:plasma membrane"/>
    <property type="evidence" value="ECO:0007669"/>
    <property type="project" value="UniProtKB-SubCell"/>
</dbReference>
<dbReference type="GO" id="GO:0046872">
    <property type="term" value="F:metal ion binding"/>
    <property type="evidence" value="ECO:0007669"/>
    <property type="project" value="UniProtKB-KW"/>
</dbReference>
<dbReference type="GO" id="GO:0016653">
    <property type="term" value="F:oxidoreductase activity, acting on NAD(P)H, heme protein as acceptor"/>
    <property type="evidence" value="ECO:0007669"/>
    <property type="project" value="InterPro"/>
</dbReference>
<dbReference type="GO" id="GO:0006784">
    <property type="term" value="P:heme A biosynthetic process"/>
    <property type="evidence" value="ECO:0007669"/>
    <property type="project" value="UniProtKB-UniRule"/>
</dbReference>
<dbReference type="HAMAP" id="MF_01664">
    <property type="entry name" value="HemeA_synth_type1"/>
    <property type="match status" value="1"/>
</dbReference>
<dbReference type="InterPro" id="IPR003780">
    <property type="entry name" value="COX15/CtaA_fam"/>
</dbReference>
<dbReference type="InterPro" id="IPR050450">
    <property type="entry name" value="COX15/CtaA_HemeA_synthase"/>
</dbReference>
<dbReference type="InterPro" id="IPR023755">
    <property type="entry name" value="HemeA_Synthase_type1"/>
</dbReference>
<dbReference type="PANTHER" id="PTHR35457">
    <property type="entry name" value="HEME A SYNTHASE"/>
    <property type="match status" value="1"/>
</dbReference>
<dbReference type="PANTHER" id="PTHR35457:SF1">
    <property type="entry name" value="HEME A SYNTHASE"/>
    <property type="match status" value="1"/>
</dbReference>
<dbReference type="Pfam" id="PF02628">
    <property type="entry name" value="COX15-CtaA"/>
    <property type="match status" value="1"/>
</dbReference>
<feature type="chain" id="PRO_0000348972" description="Heme A synthase">
    <location>
        <begin position="1"/>
        <end position="298"/>
    </location>
</feature>
<feature type="topological domain" description="Cytoplasmic" evidence="1">
    <location>
        <begin position="1"/>
        <end position="6"/>
    </location>
</feature>
<feature type="transmembrane region" description="Helical" evidence="1">
    <location>
        <begin position="7"/>
        <end position="27"/>
    </location>
</feature>
<feature type="topological domain" description="Extracellular" evidence="1">
    <location>
        <begin position="28"/>
        <end position="62"/>
    </location>
</feature>
<feature type="transmembrane region" description="Helical" evidence="1">
    <location>
        <begin position="63"/>
        <end position="83"/>
    </location>
</feature>
<feature type="topological domain" description="Cytoplasmic" evidence="1">
    <location>
        <begin position="84"/>
        <end position="92"/>
    </location>
</feature>
<feature type="transmembrane region" description="Helical" evidence="1">
    <location>
        <begin position="93"/>
        <end position="113"/>
    </location>
</feature>
<feature type="topological domain" description="Extracellular" evidence="1">
    <location>
        <begin position="114"/>
        <end position="117"/>
    </location>
</feature>
<feature type="transmembrane region" description="Helical" evidence="1">
    <location>
        <begin position="118"/>
        <end position="138"/>
    </location>
</feature>
<feature type="topological domain" description="Cytoplasmic" evidence="1">
    <location>
        <begin position="139"/>
        <end position="158"/>
    </location>
</feature>
<feature type="transmembrane region" description="Helical" evidence="1">
    <location>
        <begin position="159"/>
        <end position="179"/>
    </location>
</feature>
<feature type="topological domain" description="Extracellular" evidence="1">
    <location>
        <begin position="180"/>
        <end position="209"/>
    </location>
</feature>
<feature type="transmembrane region" description="Helical" evidence="1">
    <location>
        <begin position="210"/>
        <end position="230"/>
    </location>
</feature>
<feature type="topological domain" description="Cytoplasmic" evidence="1">
    <location>
        <begin position="231"/>
        <end position="244"/>
    </location>
</feature>
<feature type="transmembrane region" description="Helical" evidence="1">
    <location>
        <begin position="245"/>
        <end position="265"/>
    </location>
</feature>
<feature type="topological domain" description="Extracellular" evidence="1">
    <location>
        <begin position="266"/>
        <end position="271"/>
    </location>
</feature>
<feature type="transmembrane region" description="Helical" evidence="1">
    <location>
        <begin position="272"/>
        <end position="292"/>
    </location>
</feature>
<feature type="topological domain" description="Cytoplasmic" evidence="1">
    <location>
        <begin position="293"/>
        <end position="298"/>
    </location>
</feature>
<feature type="active site" evidence="1">
    <location>
        <position position="58"/>
    </location>
</feature>
<feature type="binding site" description="axial binding residue" evidence="1">
    <location>
        <position position="61"/>
    </location>
    <ligand>
        <name>heme o</name>
        <dbReference type="ChEBI" id="CHEBI:24480"/>
    </ligand>
    <ligandPart>
        <name>Fe</name>
        <dbReference type="ChEBI" id="CHEBI:18248"/>
    </ligandPart>
</feature>
<feature type="binding site" description="axial binding residue" evidence="1">
    <location>
        <position position="123"/>
    </location>
    <ligand>
        <name>heme o</name>
        <dbReference type="ChEBI" id="CHEBI:24480"/>
    </ligand>
    <ligandPart>
        <name>Fe</name>
        <dbReference type="ChEBI" id="CHEBI:18248"/>
    </ligandPart>
</feature>
<feature type="binding site" description="axial binding residue" evidence="1">
    <location>
        <position position="212"/>
    </location>
    <ligand>
        <name>heme b</name>
        <dbReference type="ChEBI" id="CHEBI:60344"/>
    </ligand>
    <ligandPart>
        <name>Fe</name>
        <dbReference type="ChEBI" id="CHEBI:18248"/>
    </ligandPart>
</feature>
<feature type="binding site" description="axial binding residue" evidence="1">
    <location>
        <position position="274"/>
    </location>
    <ligand>
        <name>heme b</name>
        <dbReference type="ChEBI" id="CHEBI:60344"/>
    </ligand>
    <ligandPart>
        <name>Fe</name>
        <dbReference type="ChEBI" id="CHEBI:18248"/>
    </ligandPart>
</feature>
<feature type="disulfide bond" description="Essential for catalytic activity" evidence="1">
    <location>
        <begin position="35"/>
        <end position="42"/>
    </location>
</feature>
<feature type="disulfide bond" evidence="1">
    <location>
        <begin position="188"/>
        <end position="194"/>
    </location>
</feature>
<protein>
    <recommendedName>
        <fullName evidence="1">Heme A synthase</fullName>
        <shortName evidence="1">HAS</shortName>
        <ecNumber evidence="1">1.17.99.9</ecNumber>
    </recommendedName>
    <alternativeName>
        <fullName evidence="1">Cytochrome aa3-controlling protein</fullName>
    </alternativeName>
</protein>